<gene>
    <name type="primary">GSA</name>
</gene>
<proteinExistence type="evidence at transcript level"/>
<organism>
    <name type="scientific">Nicotiana tabacum</name>
    <name type="common">Common tobacco</name>
    <dbReference type="NCBI Taxonomy" id="4097"/>
    <lineage>
        <taxon>Eukaryota</taxon>
        <taxon>Viridiplantae</taxon>
        <taxon>Streptophyta</taxon>
        <taxon>Embryophyta</taxon>
        <taxon>Tracheophyta</taxon>
        <taxon>Spermatophyta</taxon>
        <taxon>Magnoliopsida</taxon>
        <taxon>eudicotyledons</taxon>
        <taxon>Gunneridae</taxon>
        <taxon>Pentapetalae</taxon>
        <taxon>asterids</taxon>
        <taxon>lamiids</taxon>
        <taxon>Solanales</taxon>
        <taxon>Solanaceae</taxon>
        <taxon>Nicotianoideae</taxon>
        <taxon>Nicotianeae</taxon>
        <taxon>Nicotiana</taxon>
    </lineage>
</organism>
<keyword id="KW-0149">Chlorophyll biosynthesis</keyword>
<keyword id="KW-0150">Chloroplast</keyword>
<keyword id="KW-0413">Isomerase</keyword>
<keyword id="KW-0934">Plastid</keyword>
<keyword id="KW-0627">Porphyrin biosynthesis</keyword>
<keyword id="KW-0663">Pyridoxal phosphate</keyword>
<keyword id="KW-1185">Reference proteome</keyword>
<keyword id="KW-0809">Transit peptide</keyword>
<protein>
    <recommendedName>
        <fullName>Glutamate-1-semialdehyde 2,1-aminomutase, chloroplastic</fullName>
        <shortName>GSA</shortName>
        <ecNumber>5.4.3.8</ecNumber>
    </recommendedName>
    <alternativeName>
        <fullName>Glutamate-1-semialdehyde aminotransferase</fullName>
        <shortName>GSA-AT</shortName>
    </alternativeName>
</protein>
<feature type="transit peptide" description="Chloroplast">
    <location>
        <begin position="1"/>
        <end status="unknown"/>
    </location>
</feature>
<feature type="chain" id="PRO_0000001261" description="Glutamate-1-semialdehyde 2,1-aminomutase, chloroplastic">
    <location>
        <begin status="unknown"/>
        <end position="478"/>
    </location>
</feature>
<feature type="modified residue" description="N6-(pyridoxal phosphate)lysine" evidence="1">
    <location>
        <position position="318"/>
    </location>
</feature>
<feature type="sequence variant" description="In isozyme 2.">
    <original>G</original>
    <variation>S</variation>
    <location>
        <position position="18"/>
    </location>
</feature>
<feature type="sequence variant" description="In isozyme 2.">
    <original>E</original>
    <variation>D</variation>
    <location>
        <position position="104"/>
    </location>
</feature>
<feature type="sequence variant" description="In isozyme 2.">
    <original>G</original>
    <variation>V</variation>
    <location>
        <position position="221"/>
    </location>
</feature>
<feature type="sequence variant" description="In isozyme 2.">
    <original>S</original>
    <variation>T</variation>
    <location>
        <position position="227"/>
    </location>
</feature>
<feature type="sequence variant" description="In isozyme 2.">
    <original>E</original>
    <variation>K</variation>
    <location>
        <position position="245"/>
    </location>
</feature>
<feature type="sequence variant" description="In isozyme 2.">
    <original>L</original>
    <variation>P</variation>
    <location>
        <position position="270"/>
    </location>
</feature>
<feature type="sequence variant" description="In isozyme 2.">
    <original>E</original>
    <variation>D</variation>
    <location>
        <position position="375"/>
    </location>
</feature>
<feature type="sequence variant" description="In isozyme 2.">
    <original>L</original>
    <variation>F</variation>
    <location>
        <position position="411"/>
    </location>
</feature>
<feature type="sequence variant" description="In isozyme 2.">
    <original>A</original>
    <variation>V</variation>
    <location>
        <position position="413"/>
    </location>
</feature>
<feature type="sequence variant" description="In isozyme 2.">
    <original>K</original>
    <variation>R</variation>
    <location>
        <position position="466"/>
    </location>
</feature>
<dbReference type="EC" id="5.4.3.8"/>
<dbReference type="EMBL" id="X65973">
    <property type="protein sequence ID" value="CAA46786.1"/>
    <property type="molecule type" value="mRNA"/>
</dbReference>
<dbReference type="EMBL" id="X65974">
    <property type="protein sequence ID" value="CAA46787.1"/>
    <property type="molecule type" value="mRNA"/>
</dbReference>
<dbReference type="PIR" id="S21454">
    <property type="entry name" value="S21454"/>
</dbReference>
<dbReference type="PIR" id="S21455">
    <property type="entry name" value="S21455"/>
</dbReference>
<dbReference type="RefSeq" id="NP_001311974.1">
    <property type="nucleotide sequence ID" value="NM_001325045.1"/>
</dbReference>
<dbReference type="SMR" id="P31593"/>
<dbReference type="STRING" id="4097.P31593"/>
<dbReference type="PaxDb" id="4097-P31593"/>
<dbReference type="ProMEX" id="P31593"/>
<dbReference type="GeneID" id="107769957"/>
<dbReference type="KEGG" id="nta:107769957"/>
<dbReference type="OrthoDB" id="425114at2759"/>
<dbReference type="UniPathway" id="UPA00251">
    <property type="reaction ID" value="UER00317"/>
</dbReference>
<dbReference type="UniPathway" id="UPA00668"/>
<dbReference type="Proteomes" id="UP000084051">
    <property type="component" value="Unplaced"/>
</dbReference>
<dbReference type="GO" id="GO:0009507">
    <property type="term" value="C:chloroplast"/>
    <property type="evidence" value="ECO:0000318"/>
    <property type="project" value="GO_Central"/>
</dbReference>
<dbReference type="GO" id="GO:0042286">
    <property type="term" value="F:glutamate-1-semialdehyde 2,1-aminomutase activity"/>
    <property type="evidence" value="ECO:0007669"/>
    <property type="project" value="UniProtKB-EC"/>
</dbReference>
<dbReference type="GO" id="GO:0030170">
    <property type="term" value="F:pyridoxal phosphate binding"/>
    <property type="evidence" value="ECO:0007669"/>
    <property type="project" value="InterPro"/>
</dbReference>
<dbReference type="GO" id="GO:0008483">
    <property type="term" value="F:transaminase activity"/>
    <property type="evidence" value="ECO:0007669"/>
    <property type="project" value="InterPro"/>
</dbReference>
<dbReference type="GO" id="GO:0015995">
    <property type="term" value="P:chlorophyll biosynthetic process"/>
    <property type="evidence" value="ECO:0007669"/>
    <property type="project" value="UniProtKB-UniPathway"/>
</dbReference>
<dbReference type="GO" id="GO:0006782">
    <property type="term" value="P:protoporphyrinogen IX biosynthetic process"/>
    <property type="evidence" value="ECO:0007669"/>
    <property type="project" value="UniProtKB-UniPathway"/>
</dbReference>
<dbReference type="CDD" id="cd00610">
    <property type="entry name" value="OAT_like"/>
    <property type="match status" value="1"/>
</dbReference>
<dbReference type="FunFam" id="3.40.640.10:FF:000021">
    <property type="entry name" value="Glutamate-1-semialdehyde 2,1-aminomutase"/>
    <property type="match status" value="1"/>
</dbReference>
<dbReference type="FunFam" id="3.90.1150.10:FF:000012">
    <property type="entry name" value="Glutamate-1-semialdehyde 2,1-aminomutase"/>
    <property type="match status" value="1"/>
</dbReference>
<dbReference type="Gene3D" id="3.90.1150.10">
    <property type="entry name" value="Aspartate Aminotransferase, domain 1"/>
    <property type="match status" value="1"/>
</dbReference>
<dbReference type="Gene3D" id="3.40.640.10">
    <property type="entry name" value="Type I PLP-dependent aspartate aminotransferase-like (Major domain)"/>
    <property type="match status" value="1"/>
</dbReference>
<dbReference type="HAMAP" id="MF_00375">
    <property type="entry name" value="HemL_aminotrans_3"/>
    <property type="match status" value="1"/>
</dbReference>
<dbReference type="InterPro" id="IPR004639">
    <property type="entry name" value="4pyrrol_synth_GluAld_NH2Trfase"/>
</dbReference>
<dbReference type="InterPro" id="IPR005814">
    <property type="entry name" value="Aminotrans_3"/>
</dbReference>
<dbReference type="InterPro" id="IPR049704">
    <property type="entry name" value="Aminotrans_3_PPA_site"/>
</dbReference>
<dbReference type="InterPro" id="IPR015424">
    <property type="entry name" value="PyrdxlP-dep_Trfase"/>
</dbReference>
<dbReference type="InterPro" id="IPR015421">
    <property type="entry name" value="PyrdxlP-dep_Trfase_major"/>
</dbReference>
<dbReference type="InterPro" id="IPR015422">
    <property type="entry name" value="PyrdxlP-dep_Trfase_small"/>
</dbReference>
<dbReference type="NCBIfam" id="TIGR00713">
    <property type="entry name" value="hemL"/>
    <property type="match status" value="1"/>
</dbReference>
<dbReference type="NCBIfam" id="NF000818">
    <property type="entry name" value="PRK00062.1"/>
    <property type="match status" value="1"/>
</dbReference>
<dbReference type="PANTHER" id="PTHR43713">
    <property type="entry name" value="GLUTAMATE-1-SEMIALDEHYDE 2,1-AMINOMUTASE"/>
    <property type="match status" value="1"/>
</dbReference>
<dbReference type="PANTHER" id="PTHR43713:SF3">
    <property type="entry name" value="GLUTAMATE-1-SEMIALDEHYDE 2,1-AMINOMUTASE 1, CHLOROPLASTIC-RELATED"/>
    <property type="match status" value="1"/>
</dbReference>
<dbReference type="Pfam" id="PF00202">
    <property type="entry name" value="Aminotran_3"/>
    <property type="match status" value="1"/>
</dbReference>
<dbReference type="SUPFAM" id="SSF53383">
    <property type="entry name" value="PLP-dependent transferases"/>
    <property type="match status" value="1"/>
</dbReference>
<dbReference type="PROSITE" id="PS00600">
    <property type="entry name" value="AA_TRANSFER_CLASS_3"/>
    <property type="match status" value="1"/>
</dbReference>
<comment type="catalytic activity">
    <reaction>
        <text>(S)-4-amino-5-oxopentanoate = 5-aminolevulinate</text>
        <dbReference type="Rhea" id="RHEA:14265"/>
        <dbReference type="ChEBI" id="CHEBI:57501"/>
        <dbReference type="ChEBI" id="CHEBI:356416"/>
        <dbReference type="EC" id="5.4.3.8"/>
    </reaction>
</comment>
<comment type="cofactor">
    <cofactor>
        <name>pyridoxal 5'-phosphate</name>
        <dbReference type="ChEBI" id="CHEBI:597326"/>
    </cofactor>
</comment>
<comment type="pathway">
    <text>Porphyrin-containing compound metabolism; protoporphyrin-IX biosynthesis; 5-aminolevulinate from L-glutamyl-tRNA(Glu): step 2/2.</text>
</comment>
<comment type="pathway">
    <text>Porphyrin-containing compound metabolism; chlorophyll biosynthesis.</text>
</comment>
<comment type="subunit">
    <text>Homodimer.</text>
</comment>
<comment type="subcellular location">
    <subcellularLocation>
        <location>Plastid</location>
        <location>Chloroplast</location>
    </subcellularLocation>
</comment>
<comment type="similarity">
    <text evidence="2">Belongs to the class-III pyridoxal-phosphate-dependent aminotransferase family. HemL subfamily.</text>
</comment>
<name>GSA_TOBAC</name>
<sequence>MAAVNGVGISWPSKLTQGQRPKLVFSPSPRRCTPSSSTIKMTASVDEKKKTFTLQKSEEAFSKAKELMPGGVNSPVRAFKSVGGQPIIIDSVKGSRMRDIDGNEYIDYVGSWGPAIIGHADDEVLAALAETMKKGTSFGAPCLLENTLAEMVISAVPSIEMVRFVNSGTEACMGVLRLARAFTGRPKIIKFEGCYHGHADPFLVKAGSGVATLGLPDSPGGPKAATSDTLTAPYNDISAVESLFEEHKGEVAAIILEPVVGNAGFIQPNLDFLAAIRKITKENDALLIFDEVMTGFRLAYGGAQEYFGITPDLTTLGKIIGGGLPVGAYGGRRDIMEMVAPAGPMYQAGTLSGNPLAMTAGIHTLKRLQGPGTYEYLDKITGELTQGILDAGKKTGHAMCGGYIRGMFGFLFAEGPVNNFSDAKKSDTEKFGRFYRGMLEEGVYFAPSQFEAGFTSLAHTSEDIQKTVAAAEKVLKQI</sequence>
<reference key="1">
    <citation type="journal article" date="1994" name="Proc. Natl. Acad. Sci. U.S.A.">
        <title>A visible marker for antisense mRNA expression in plants: inhibition of chlorophyll synthesis with a glutamate-1-semialdehyde aminotransferase antisense gene.</title>
        <authorList>
            <person name="Hoefgen R."/>
            <person name="Axelsen K.B."/>
            <person name="Kannangara C.G."/>
            <person name="Schuettke I."/>
            <person name="Pohlenz H.-D."/>
            <person name="Willmitzer L."/>
            <person name="Grimm B."/>
            <person name="von Wettstein D."/>
        </authorList>
    </citation>
    <scope>NUCLEOTIDE SEQUENCE [MRNA]</scope>
    <source>
        <strain>cv. SR1</strain>
    </source>
</reference>
<accession>P31593</accession>
<evidence type="ECO:0000250" key="1"/>
<evidence type="ECO:0000305" key="2"/>